<feature type="chain" id="PRO_1000086005" description="Small ribosomal subunit protein uS5">
    <location>
        <begin position="1"/>
        <end position="167"/>
    </location>
</feature>
<feature type="domain" description="S5 DRBM" evidence="1">
    <location>
        <begin position="11"/>
        <end position="74"/>
    </location>
</feature>
<dbReference type="EMBL" id="CP000468">
    <property type="protein sequence ID" value="ABJ02782.1"/>
    <property type="molecule type" value="Genomic_DNA"/>
</dbReference>
<dbReference type="RefSeq" id="WP_000940121.1">
    <property type="nucleotide sequence ID" value="NZ_CADILS010000044.1"/>
</dbReference>
<dbReference type="EMDB" id="EMD-0482"/>
<dbReference type="EMDB" id="EMD-12736"/>
<dbReference type="SMR" id="A1AGJ2"/>
<dbReference type="GeneID" id="93778684"/>
<dbReference type="KEGG" id="ecv:APECO1_3146"/>
<dbReference type="HOGENOM" id="CLU_065898_2_2_6"/>
<dbReference type="Proteomes" id="UP000008216">
    <property type="component" value="Chromosome"/>
</dbReference>
<dbReference type="GO" id="GO:0015935">
    <property type="term" value="C:small ribosomal subunit"/>
    <property type="evidence" value="ECO:0007669"/>
    <property type="project" value="InterPro"/>
</dbReference>
<dbReference type="GO" id="GO:0019843">
    <property type="term" value="F:rRNA binding"/>
    <property type="evidence" value="ECO:0007669"/>
    <property type="project" value="UniProtKB-UniRule"/>
</dbReference>
<dbReference type="GO" id="GO:0003735">
    <property type="term" value="F:structural constituent of ribosome"/>
    <property type="evidence" value="ECO:0007669"/>
    <property type="project" value="InterPro"/>
</dbReference>
<dbReference type="GO" id="GO:0006412">
    <property type="term" value="P:translation"/>
    <property type="evidence" value="ECO:0007669"/>
    <property type="project" value="UniProtKB-UniRule"/>
</dbReference>
<dbReference type="FunFam" id="3.30.160.20:FF:000001">
    <property type="entry name" value="30S ribosomal protein S5"/>
    <property type="match status" value="1"/>
</dbReference>
<dbReference type="FunFam" id="3.30.230.10:FF:000002">
    <property type="entry name" value="30S ribosomal protein S5"/>
    <property type="match status" value="1"/>
</dbReference>
<dbReference type="Gene3D" id="3.30.160.20">
    <property type="match status" value="1"/>
</dbReference>
<dbReference type="Gene3D" id="3.30.230.10">
    <property type="match status" value="1"/>
</dbReference>
<dbReference type="HAMAP" id="MF_01307_B">
    <property type="entry name" value="Ribosomal_uS5_B"/>
    <property type="match status" value="1"/>
</dbReference>
<dbReference type="InterPro" id="IPR020568">
    <property type="entry name" value="Ribosomal_Su5_D2-typ_SF"/>
</dbReference>
<dbReference type="InterPro" id="IPR000851">
    <property type="entry name" value="Ribosomal_uS5"/>
</dbReference>
<dbReference type="InterPro" id="IPR005712">
    <property type="entry name" value="Ribosomal_uS5_bac-type"/>
</dbReference>
<dbReference type="InterPro" id="IPR005324">
    <property type="entry name" value="Ribosomal_uS5_C"/>
</dbReference>
<dbReference type="InterPro" id="IPR013810">
    <property type="entry name" value="Ribosomal_uS5_N"/>
</dbReference>
<dbReference type="InterPro" id="IPR018192">
    <property type="entry name" value="Ribosomal_uS5_N_CS"/>
</dbReference>
<dbReference type="InterPro" id="IPR014721">
    <property type="entry name" value="Ribsml_uS5_D2-typ_fold_subgr"/>
</dbReference>
<dbReference type="NCBIfam" id="TIGR01021">
    <property type="entry name" value="rpsE_bact"/>
    <property type="match status" value="1"/>
</dbReference>
<dbReference type="PANTHER" id="PTHR48277">
    <property type="entry name" value="MITOCHONDRIAL RIBOSOMAL PROTEIN S5"/>
    <property type="match status" value="1"/>
</dbReference>
<dbReference type="PANTHER" id="PTHR48277:SF1">
    <property type="entry name" value="MITOCHONDRIAL RIBOSOMAL PROTEIN S5"/>
    <property type="match status" value="1"/>
</dbReference>
<dbReference type="Pfam" id="PF00333">
    <property type="entry name" value="Ribosomal_S5"/>
    <property type="match status" value="1"/>
</dbReference>
<dbReference type="Pfam" id="PF03719">
    <property type="entry name" value="Ribosomal_S5_C"/>
    <property type="match status" value="1"/>
</dbReference>
<dbReference type="SUPFAM" id="SSF54768">
    <property type="entry name" value="dsRNA-binding domain-like"/>
    <property type="match status" value="1"/>
</dbReference>
<dbReference type="SUPFAM" id="SSF54211">
    <property type="entry name" value="Ribosomal protein S5 domain 2-like"/>
    <property type="match status" value="1"/>
</dbReference>
<dbReference type="PROSITE" id="PS00585">
    <property type="entry name" value="RIBOSOMAL_S5"/>
    <property type="match status" value="1"/>
</dbReference>
<dbReference type="PROSITE" id="PS50881">
    <property type="entry name" value="S5_DSRBD"/>
    <property type="match status" value="1"/>
</dbReference>
<evidence type="ECO:0000255" key="1">
    <source>
        <dbReference type="HAMAP-Rule" id="MF_01307"/>
    </source>
</evidence>
<evidence type="ECO:0000305" key="2"/>
<name>RS5_ECOK1</name>
<proteinExistence type="inferred from homology"/>
<gene>
    <name evidence="1" type="primary">rpsE</name>
    <name type="ordered locus">Ecok1_32880</name>
    <name type="ORF">APECO1_3146</name>
</gene>
<accession>A1AGJ2</accession>
<protein>
    <recommendedName>
        <fullName evidence="1">Small ribosomal subunit protein uS5</fullName>
    </recommendedName>
    <alternativeName>
        <fullName evidence="2">30S ribosomal protein S5</fullName>
    </alternativeName>
</protein>
<sequence>MAHIEKQAGELQEKLIAVNRVSKTVKGGRIFSFTALTVVGDGNGRVGFGYGKAREVPAAIQKAMEKARRNMINVALNNGTLQHPVKGVHTGSRVFMQPASEGTGIIAGGAMRAVLEVAGVHNVLAKAYGSTNPINVVRATIDGLENMNSPEMVAAKRGKSVEEILGK</sequence>
<organism>
    <name type="scientific">Escherichia coli O1:K1 / APEC</name>
    <dbReference type="NCBI Taxonomy" id="405955"/>
    <lineage>
        <taxon>Bacteria</taxon>
        <taxon>Pseudomonadati</taxon>
        <taxon>Pseudomonadota</taxon>
        <taxon>Gammaproteobacteria</taxon>
        <taxon>Enterobacterales</taxon>
        <taxon>Enterobacteriaceae</taxon>
        <taxon>Escherichia</taxon>
    </lineage>
</organism>
<reference key="1">
    <citation type="journal article" date="2007" name="J. Bacteriol.">
        <title>The genome sequence of avian pathogenic Escherichia coli strain O1:K1:H7 shares strong similarities with human extraintestinal pathogenic E. coli genomes.</title>
        <authorList>
            <person name="Johnson T.J."/>
            <person name="Kariyawasam S."/>
            <person name="Wannemuehler Y."/>
            <person name="Mangiamele P."/>
            <person name="Johnson S.J."/>
            <person name="Doetkott C."/>
            <person name="Skyberg J.A."/>
            <person name="Lynne A.M."/>
            <person name="Johnson J.R."/>
            <person name="Nolan L.K."/>
        </authorList>
    </citation>
    <scope>NUCLEOTIDE SEQUENCE [LARGE SCALE GENOMIC DNA]</scope>
</reference>
<keyword id="KW-1185">Reference proteome</keyword>
<keyword id="KW-0687">Ribonucleoprotein</keyword>
<keyword id="KW-0689">Ribosomal protein</keyword>
<keyword id="KW-0694">RNA-binding</keyword>
<keyword id="KW-0699">rRNA-binding</keyword>
<comment type="function">
    <text evidence="1">With S4 and S12 plays an important role in translational accuracy.</text>
</comment>
<comment type="function">
    <text evidence="1">Located at the back of the 30S subunit body where it stabilizes the conformation of the head with respect to the body.</text>
</comment>
<comment type="subunit">
    <text evidence="1">Part of the 30S ribosomal subunit. Contacts proteins S4 and S8.</text>
</comment>
<comment type="domain">
    <text>The N-terminal domain interacts with the head of the 30S subunit; the C-terminal domain interacts with the body and contacts protein S4. The interaction surface between S4 and S5 is involved in control of translational fidelity.</text>
</comment>
<comment type="similarity">
    <text evidence="1">Belongs to the universal ribosomal protein uS5 family.</text>
</comment>